<proteinExistence type="evidence at protein level"/>
<sequence length="68" mass="7458">RICYIAPYDHKTCAAGENICYLKAWCDAWCSSRGKKLEFGCAATCPTVKPGVDISCCDTDNCNPHPKL</sequence>
<evidence type="ECO:0000250" key="1"/>
<evidence type="ECO:0000250" key="2">
    <source>
        <dbReference type="UniProtKB" id="P60615"/>
    </source>
</evidence>
<evidence type="ECO:0000269" key="3">
    <source>
    </source>
</evidence>
<evidence type="ECO:0000305" key="4"/>
<feature type="chain" id="PRO_0000093529" description="Long neurotoxin 1">
    <location>
        <begin position="1"/>
        <end position="68"/>
    </location>
</feature>
<feature type="disulfide bond" evidence="1">
    <location>
        <begin position="3"/>
        <end position="20"/>
    </location>
</feature>
<feature type="disulfide bond" evidence="1">
    <location>
        <begin position="13"/>
        <end position="41"/>
    </location>
</feature>
<feature type="disulfide bond" evidence="1">
    <location>
        <begin position="26"/>
        <end position="30"/>
    </location>
</feature>
<feature type="disulfide bond" evidence="1">
    <location>
        <begin position="45"/>
        <end position="56"/>
    </location>
</feature>
<feature type="disulfide bond" evidence="1">
    <location>
        <begin position="57"/>
        <end position="62"/>
    </location>
</feature>
<reference key="1">
    <citation type="journal article" date="1988" name="Int. J. Biochem.">
        <title>Snake venom toxins -- I. The primary structure of a long neurotoxin S4C6 from Aspidelaps scutatus (shield or shield-nose snake) venom.</title>
        <authorList>
            <person name="Joubert F.J."/>
        </authorList>
    </citation>
    <scope>PROTEIN SEQUENCE</scope>
    <scope>TOXIC DOSE</scope>
    <scope>SUBCELLULAR LOCATION</scope>
    <source>
        <tissue>Venom</tissue>
    </source>
</reference>
<organism>
    <name type="scientific">Aspidelaps scutatus</name>
    <name type="common">Shield-nose snake</name>
    <dbReference type="NCBI Taxonomy" id="8607"/>
    <lineage>
        <taxon>Eukaryota</taxon>
        <taxon>Metazoa</taxon>
        <taxon>Chordata</taxon>
        <taxon>Craniata</taxon>
        <taxon>Vertebrata</taxon>
        <taxon>Euteleostomi</taxon>
        <taxon>Lepidosauria</taxon>
        <taxon>Squamata</taxon>
        <taxon>Bifurcata</taxon>
        <taxon>Unidentata</taxon>
        <taxon>Episquamata</taxon>
        <taxon>Toxicofera</taxon>
        <taxon>Serpentes</taxon>
        <taxon>Colubroidea</taxon>
        <taxon>Elapidae</taxon>
        <taxon>Elapidae incertae sedis</taxon>
        <taxon>Aspidelaps</taxon>
    </lineage>
</organism>
<keyword id="KW-0008">Acetylcholine receptor inhibiting toxin</keyword>
<keyword id="KW-0903">Direct protein sequencing</keyword>
<keyword id="KW-1015">Disulfide bond</keyword>
<keyword id="KW-0872">Ion channel impairing toxin</keyword>
<keyword id="KW-0528">Neurotoxin</keyword>
<keyword id="KW-0629">Postsynaptic neurotoxin</keyword>
<keyword id="KW-0964">Secreted</keyword>
<keyword id="KW-0800">Toxin</keyword>
<protein>
    <recommendedName>
        <fullName>Long neurotoxin 1</fullName>
    </recommendedName>
    <alternativeName>
        <fullName>Toxin S4C6</fullName>
    </alternativeName>
</protein>
<name>3L21_ASPSC</name>
<dbReference type="SMR" id="P25670"/>
<dbReference type="GO" id="GO:0005576">
    <property type="term" value="C:extracellular region"/>
    <property type="evidence" value="ECO:0007669"/>
    <property type="project" value="UniProtKB-SubCell"/>
</dbReference>
<dbReference type="GO" id="GO:0030550">
    <property type="term" value="F:acetylcholine receptor inhibitor activity"/>
    <property type="evidence" value="ECO:0007669"/>
    <property type="project" value="UniProtKB-KW"/>
</dbReference>
<dbReference type="GO" id="GO:0099106">
    <property type="term" value="F:ion channel regulator activity"/>
    <property type="evidence" value="ECO:0007669"/>
    <property type="project" value="UniProtKB-KW"/>
</dbReference>
<dbReference type="GO" id="GO:0090729">
    <property type="term" value="F:toxin activity"/>
    <property type="evidence" value="ECO:0007669"/>
    <property type="project" value="UniProtKB-KW"/>
</dbReference>
<dbReference type="CDD" id="cd00206">
    <property type="entry name" value="TFP_snake_toxin"/>
    <property type="match status" value="1"/>
</dbReference>
<dbReference type="Gene3D" id="2.10.60.10">
    <property type="entry name" value="CD59"/>
    <property type="match status" value="1"/>
</dbReference>
<dbReference type="InterPro" id="IPR003571">
    <property type="entry name" value="Snake_3FTx"/>
</dbReference>
<dbReference type="InterPro" id="IPR045860">
    <property type="entry name" value="Snake_toxin-like_sf"/>
</dbReference>
<dbReference type="InterPro" id="IPR018354">
    <property type="entry name" value="Snake_toxin_con_site"/>
</dbReference>
<dbReference type="InterPro" id="IPR054131">
    <property type="entry name" value="Toxin_cobra-type"/>
</dbReference>
<dbReference type="Pfam" id="PF21947">
    <property type="entry name" value="Toxin_cobra-type"/>
    <property type="match status" value="1"/>
</dbReference>
<dbReference type="SUPFAM" id="SSF57302">
    <property type="entry name" value="Snake toxin-like"/>
    <property type="match status" value="1"/>
</dbReference>
<dbReference type="PROSITE" id="PS00272">
    <property type="entry name" value="SNAKE_TOXIN"/>
    <property type="match status" value="1"/>
</dbReference>
<comment type="function">
    <text evidence="2">Binds with high affinity to muscular (alpha-1/CHRNA1) and neuronal (alpha-7/CHRNA7) nicotinic acetylcholine receptor (nAChR) and inhibits acetylcholine from binding to the receptor, thereby impairing neuromuscular and neuronal transmission.</text>
</comment>
<comment type="subcellular location">
    <subcellularLocation>
        <location evidence="3">Secreted</location>
    </subcellularLocation>
</comment>
<comment type="tissue specificity">
    <text evidence="4">Expressed by the venom gland.</text>
</comment>
<comment type="toxic dose">
    <text evidence="3">LD(50) is 0.13 mg/kg by intravenous injection.</text>
</comment>
<comment type="similarity">
    <text evidence="4">Belongs to the three-finger toxin family. Long-chain subfamily. Type II alpha-neurotoxin sub-subfamily.</text>
</comment>
<accession>P25670</accession>